<name>RLMH_THISH</name>
<accession>B8GV07</accession>
<reference key="1">
    <citation type="journal article" date="2011" name="Stand. Genomic Sci.">
        <title>Complete genome sequence of 'Thioalkalivibrio sulfidophilus' HL-EbGr7.</title>
        <authorList>
            <person name="Muyzer G."/>
            <person name="Sorokin D.Y."/>
            <person name="Mavromatis K."/>
            <person name="Lapidus A."/>
            <person name="Clum A."/>
            <person name="Ivanova N."/>
            <person name="Pati A."/>
            <person name="d'Haeseleer P."/>
            <person name="Woyke T."/>
            <person name="Kyrpides N.C."/>
        </authorList>
    </citation>
    <scope>NUCLEOTIDE SEQUENCE [LARGE SCALE GENOMIC DNA]</scope>
    <source>
        <strain>HL-EbGR7</strain>
    </source>
</reference>
<protein>
    <recommendedName>
        <fullName evidence="1">Ribosomal RNA large subunit methyltransferase H</fullName>
        <ecNumber evidence="1">2.1.1.177</ecNumber>
    </recommendedName>
    <alternativeName>
        <fullName evidence="1">23S rRNA (pseudouridine1915-N3)-methyltransferase</fullName>
    </alternativeName>
    <alternativeName>
        <fullName evidence="1">23S rRNA m3Psi1915 methyltransferase</fullName>
    </alternativeName>
    <alternativeName>
        <fullName evidence="1">rRNA (pseudouridine-N3-)-methyltransferase RlmH</fullName>
    </alternativeName>
</protein>
<comment type="function">
    <text evidence="1">Specifically methylates the pseudouridine at position 1915 (m3Psi1915) in 23S rRNA.</text>
</comment>
<comment type="catalytic activity">
    <reaction evidence="1">
        <text>pseudouridine(1915) in 23S rRNA + S-adenosyl-L-methionine = N(3)-methylpseudouridine(1915) in 23S rRNA + S-adenosyl-L-homocysteine + H(+)</text>
        <dbReference type="Rhea" id="RHEA:42752"/>
        <dbReference type="Rhea" id="RHEA-COMP:10221"/>
        <dbReference type="Rhea" id="RHEA-COMP:10222"/>
        <dbReference type="ChEBI" id="CHEBI:15378"/>
        <dbReference type="ChEBI" id="CHEBI:57856"/>
        <dbReference type="ChEBI" id="CHEBI:59789"/>
        <dbReference type="ChEBI" id="CHEBI:65314"/>
        <dbReference type="ChEBI" id="CHEBI:74486"/>
        <dbReference type="EC" id="2.1.1.177"/>
    </reaction>
</comment>
<comment type="subunit">
    <text evidence="1">Homodimer.</text>
</comment>
<comment type="subcellular location">
    <subcellularLocation>
        <location evidence="1">Cytoplasm</location>
    </subcellularLocation>
</comment>
<comment type="similarity">
    <text evidence="1">Belongs to the RNA methyltransferase RlmH family.</text>
</comment>
<proteinExistence type="inferred from homology"/>
<evidence type="ECO:0000255" key="1">
    <source>
        <dbReference type="HAMAP-Rule" id="MF_00658"/>
    </source>
</evidence>
<keyword id="KW-0963">Cytoplasm</keyword>
<keyword id="KW-0489">Methyltransferase</keyword>
<keyword id="KW-1185">Reference proteome</keyword>
<keyword id="KW-0698">rRNA processing</keyword>
<keyword id="KW-0949">S-adenosyl-L-methionine</keyword>
<keyword id="KW-0808">Transferase</keyword>
<sequence>MRIHLIAVGERMPAWVNAAYAEYANRLPAECSLNLKEIPAVKRGKNADLARIAETEGARMLEAIPKDCLVVALDEKGRSFSTAELSRRLDDWMHSGRDLALLVGGPEGLTDACRARADLVWSLSPLTFPHPLVRVILAEQVYRAWSLLRGHPYHRE</sequence>
<organism>
    <name type="scientific">Thioalkalivibrio sulfidiphilus (strain HL-EbGR7)</name>
    <dbReference type="NCBI Taxonomy" id="396588"/>
    <lineage>
        <taxon>Bacteria</taxon>
        <taxon>Pseudomonadati</taxon>
        <taxon>Pseudomonadota</taxon>
        <taxon>Gammaproteobacteria</taxon>
        <taxon>Chromatiales</taxon>
        <taxon>Ectothiorhodospiraceae</taxon>
        <taxon>Thioalkalivibrio</taxon>
    </lineage>
</organism>
<gene>
    <name evidence="1" type="primary">rlmH</name>
    <name type="ordered locus">Tgr7_2273</name>
</gene>
<dbReference type="EC" id="2.1.1.177" evidence="1"/>
<dbReference type="EMBL" id="CP001339">
    <property type="protein sequence ID" value="ACL73353.1"/>
    <property type="molecule type" value="Genomic_DNA"/>
</dbReference>
<dbReference type="RefSeq" id="WP_012638829.1">
    <property type="nucleotide sequence ID" value="NC_011901.1"/>
</dbReference>
<dbReference type="SMR" id="B8GV07"/>
<dbReference type="STRING" id="396588.Tgr7_2273"/>
<dbReference type="KEGG" id="tgr:Tgr7_2273"/>
<dbReference type="eggNOG" id="COG1576">
    <property type="taxonomic scope" value="Bacteria"/>
</dbReference>
<dbReference type="HOGENOM" id="CLU_100552_1_0_6"/>
<dbReference type="OrthoDB" id="9806643at2"/>
<dbReference type="Proteomes" id="UP000002383">
    <property type="component" value="Chromosome"/>
</dbReference>
<dbReference type="GO" id="GO:0005737">
    <property type="term" value="C:cytoplasm"/>
    <property type="evidence" value="ECO:0007669"/>
    <property type="project" value="UniProtKB-SubCell"/>
</dbReference>
<dbReference type="GO" id="GO:0070038">
    <property type="term" value="F:rRNA (pseudouridine-N3-)-methyltransferase activity"/>
    <property type="evidence" value="ECO:0007669"/>
    <property type="project" value="UniProtKB-UniRule"/>
</dbReference>
<dbReference type="CDD" id="cd18081">
    <property type="entry name" value="RlmH-like"/>
    <property type="match status" value="1"/>
</dbReference>
<dbReference type="Gene3D" id="3.40.1280.10">
    <property type="match status" value="1"/>
</dbReference>
<dbReference type="HAMAP" id="MF_00658">
    <property type="entry name" value="23SrRNA_methyltr_H"/>
    <property type="match status" value="1"/>
</dbReference>
<dbReference type="InterPro" id="IPR029028">
    <property type="entry name" value="Alpha/beta_knot_MTases"/>
</dbReference>
<dbReference type="InterPro" id="IPR003742">
    <property type="entry name" value="RlmH-like"/>
</dbReference>
<dbReference type="InterPro" id="IPR029026">
    <property type="entry name" value="tRNA_m1G_MTases_N"/>
</dbReference>
<dbReference type="NCBIfam" id="NF000986">
    <property type="entry name" value="PRK00103.1-4"/>
    <property type="match status" value="1"/>
</dbReference>
<dbReference type="NCBIfam" id="TIGR00246">
    <property type="entry name" value="tRNA_RlmH_YbeA"/>
    <property type="match status" value="1"/>
</dbReference>
<dbReference type="PANTHER" id="PTHR33603">
    <property type="entry name" value="METHYLTRANSFERASE"/>
    <property type="match status" value="1"/>
</dbReference>
<dbReference type="PANTHER" id="PTHR33603:SF1">
    <property type="entry name" value="RIBOSOMAL RNA LARGE SUBUNIT METHYLTRANSFERASE H"/>
    <property type="match status" value="1"/>
</dbReference>
<dbReference type="Pfam" id="PF02590">
    <property type="entry name" value="SPOUT_MTase"/>
    <property type="match status" value="1"/>
</dbReference>
<dbReference type="PIRSF" id="PIRSF004505">
    <property type="entry name" value="MT_bac"/>
    <property type="match status" value="1"/>
</dbReference>
<dbReference type="SUPFAM" id="SSF75217">
    <property type="entry name" value="alpha/beta knot"/>
    <property type="match status" value="1"/>
</dbReference>
<feature type="chain" id="PRO_1000212466" description="Ribosomal RNA large subunit methyltransferase H">
    <location>
        <begin position="1"/>
        <end position="156"/>
    </location>
</feature>
<feature type="binding site" evidence="1">
    <location>
        <position position="73"/>
    </location>
    <ligand>
        <name>S-adenosyl-L-methionine</name>
        <dbReference type="ChEBI" id="CHEBI:59789"/>
    </ligand>
</feature>
<feature type="binding site" evidence="1">
    <location>
        <position position="104"/>
    </location>
    <ligand>
        <name>S-adenosyl-L-methionine</name>
        <dbReference type="ChEBI" id="CHEBI:59789"/>
    </ligand>
</feature>
<feature type="binding site" evidence="1">
    <location>
        <begin position="123"/>
        <end position="128"/>
    </location>
    <ligand>
        <name>S-adenosyl-L-methionine</name>
        <dbReference type="ChEBI" id="CHEBI:59789"/>
    </ligand>
</feature>